<name>VF196_ASFP4</name>
<keyword id="KW-0426">Late protein</keyword>
<keyword id="KW-0677">Repeat</keyword>
<comment type="induction">
    <text evidence="1">Expressed in the late phase of the viral replicative cycle.</text>
</comment>
<comment type="similarity">
    <text evidence="1">Belongs to the asfivirus I196L family.</text>
</comment>
<reference key="1">
    <citation type="submission" date="2003-03" db="EMBL/GenBank/DDBJ databases">
        <title>African swine fever virus genomes.</title>
        <authorList>
            <person name="Kutish G.F."/>
            <person name="Rock D.L."/>
        </authorList>
    </citation>
    <scope>NUCLEOTIDE SEQUENCE [LARGE SCALE GENOMIC DNA]</scope>
</reference>
<sequence>MLFRYLVWLFRFIEVKNVASISLLVIGSNSLTTAISNNTSTTILPTTSSNSLMTAIPNNTSTTISPTTSSNYLTSAISTNISDKEEDTPFSTDKTVFDGLSPITLYRTIRSTLNDTSTKTMTDHILTRPYRPTTVIFHSDTPQPVKNATQGNIIKKTYRQVLTFFIQPNPLFPCFKNHEVFLNLANILNTILCIILIKNV</sequence>
<organism>
    <name type="scientific">African swine fever virus (isolate Tick/South Africa/Pretoriuskop Pr4/1996)</name>
    <name type="common">ASFV</name>
    <dbReference type="NCBI Taxonomy" id="561443"/>
    <lineage>
        <taxon>Viruses</taxon>
        <taxon>Varidnaviria</taxon>
        <taxon>Bamfordvirae</taxon>
        <taxon>Nucleocytoviricota</taxon>
        <taxon>Pokkesviricetes</taxon>
        <taxon>Asfuvirales</taxon>
        <taxon>Asfarviridae</taxon>
        <taxon>Asfivirus</taxon>
        <taxon>African swine fever virus</taxon>
    </lineage>
</organism>
<accession>P0CA92</accession>
<dbReference type="EMBL" id="AY261363">
    <property type="status" value="NOT_ANNOTATED_CDS"/>
    <property type="molecule type" value="Genomic_DNA"/>
</dbReference>
<dbReference type="Proteomes" id="UP000000859">
    <property type="component" value="Segment"/>
</dbReference>
<organismHost>
    <name type="scientific">Ornithodoros</name>
    <name type="common">relapsing fever ticks</name>
    <dbReference type="NCBI Taxonomy" id="6937"/>
</organismHost>
<organismHost>
    <name type="scientific">Phacochoerus aethiopicus</name>
    <name type="common">Warthog</name>
    <dbReference type="NCBI Taxonomy" id="85517"/>
</organismHost>
<organismHost>
    <name type="scientific">Phacochoerus africanus</name>
    <name type="common">Warthog</name>
    <dbReference type="NCBI Taxonomy" id="41426"/>
</organismHost>
<organismHost>
    <name type="scientific">Potamochoerus larvatus</name>
    <name type="common">Bushpig</name>
    <dbReference type="NCBI Taxonomy" id="273792"/>
</organismHost>
<organismHost>
    <name type="scientific">Sus scrofa</name>
    <name type="common">Pig</name>
    <dbReference type="NCBI Taxonomy" id="9823"/>
</organismHost>
<protein>
    <recommendedName>
        <fullName>Late protein I196L</fullName>
    </recommendedName>
</protein>
<proteinExistence type="inferred from homology"/>
<gene>
    <name type="ordered locus">Pret-158</name>
</gene>
<evidence type="ECO:0000305" key="1"/>
<feature type="chain" id="PRO_0000373579" description="Late protein I196L">
    <location>
        <begin position="1"/>
        <end position="200"/>
    </location>
</feature>
<feature type="repeat" description="1">
    <location>
        <begin position="28"/>
        <end position="48"/>
    </location>
</feature>
<feature type="repeat" description="2">
    <location>
        <begin position="49"/>
        <end position="69"/>
    </location>
</feature>
<feature type="repeat" description="3; approximate">
    <location>
        <begin position="70"/>
        <end position="91"/>
    </location>
</feature>